<proteinExistence type="evidence at protein level"/>
<sequence>MAASTASHRPIKGILKNKTSTTSSMVASAEQPRRSVDEELSKKSQKWDEINILATYHPADKGYGLMKIDEPSPPYHSMMGDDEDACRDTETTEAMAPDILAKKLAAAEGLEPKYRIQEQESSGEEDSDLSPEEREKKRQFEMRRKLHYNEGLNIKLARQLISKDLHDDDEDEEMLETADGESMNTEESNQGSTPSDQQQNKLRSS</sequence>
<keyword id="KW-0007">Acetylation</keyword>
<keyword id="KW-0119">Carbohydrate metabolism</keyword>
<keyword id="KW-0321">Glycogen metabolism</keyword>
<keyword id="KW-0597">Phosphoprotein</keyword>
<keyword id="KW-0650">Protein phosphatase inhibitor</keyword>
<keyword id="KW-1267">Proteomics identification</keyword>
<keyword id="KW-1185">Reference proteome</keyword>
<accession>Q6NXS1</accession>
<accession>G1AUC5</accession>
<organism>
    <name type="scientific">Homo sapiens</name>
    <name type="common">Human</name>
    <dbReference type="NCBI Taxonomy" id="9606"/>
    <lineage>
        <taxon>Eukaryota</taxon>
        <taxon>Metazoa</taxon>
        <taxon>Chordata</taxon>
        <taxon>Craniata</taxon>
        <taxon>Vertebrata</taxon>
        <taxon>Euteleostomi</taxon>
        <taxon>Mammalia</taxon>
        <taxon>Eutheria</taxon>
        <taxon>Euarchontoglires</taxon>
        <taxon>Primates</taxon>
        <taxon>Haplorrhini</taxon>
        <taxon>Catarrhini</taxon>
        <taxon>Hominidae</taxon>
        <taxon>Homo</taxon>
    </lineage>
</organism>
<name>IPP2B_HUMAN</name>
<gene>
    <name evidence="8" type="primary">PPP1R2B</name>
    <name type="synonym">PPP1R2P3</name>
</gene>
<evidence type="ECO:0000250" key="1"/>
<evidence type="ECO:0000250" key="2">
    <source>
        <dbReference type="UniProtKB" id="P11845"/>
    </source>
</evidence>
<evidence type="ECO:0000250" key="3">
    <source>
        <dbReference type="UniProtKB" id="P41236"/>
    </source>
</evidence>
<evidence type="ECO:0000250" key="4">
    <source>
        <dbReference type="UniProtKB" id="P50411"/>
    </source>
</evidence>
<evidence type="ECO:0000256" key="5">
    <source>
        <dbReference type="SAM" id="MobiDB-lite"/>
    </source>
</evidence>
<evidence type="ECO:0000269" key="6">
    <source>
    </source>
</evidence>
<evidence type="ECO:0000305" key="7"/>
<evidence type="ECO:0000312" key="8">
    <source>
        <dbReference type="HGNC" id="HGNC:16318"/>
    </source>
</evidence>
<feature type="initiator methionine" description="Removed" evidence="2">
    <location>
        <position position="1"/>
    </location>
</feature>
<feature type="chain" id="PRO_0000286138" description="Protein phosphatase inhibitor 2 family member B">
    <location>
        <begin position="2"/>
        <end position="205"/>
    </location>
</feature>
<feature type="region of interest" description="Disordered" evidence="5">
    <location>
        <begin position="1"/>
        <end position="44"/>
    </location>
</feature>
<feature type="region of interest" description="Required for binding PPP1CC" evidence="1">
    <location>
        <begin position="12"/>
        <end position="17"/>
    </location>
</feature>
<feature type="region of interest" description="Required for binding PPP1CC" evidence="1">
    <location>
        <begin position="43"/>
        <end position="55"/>
    </location>
</feature>
<feature type="region of interest" description="Disordered" evidence="5">
    <location>
        <begin position="111"/>
        <end position="142"/>
    </location>
</feature>
<feature type="region of interest" description="Required for binding PPP1CC catalytic center, displacing metal ions and inhibition of PPP1CC catalytic activity" evidence="1">
    <location>
        <begin position="147"/>
        <end position="150"/>
    </location>
</feature>
<feature type="region of interest" description="Disordered" evidence="5">
    <location>
        <begin position="163"/>
        <end position="205"/>
    </location>
</feature>
<feature type="compositionally biased region" description="Polar residues" evidence="5">
    <location>
        <begin position="17"/>
        <end position="26"/>
    </location>
</feature>
<feature type="compositionally biased region" description="Basic and acidic residues" evidence="5">
    <location>
        <begin position="31"/>
        <end position="44"/>
    </location>
</feature>
<feature type="compositionally biased region" description="Acidic residues" evidence="5">
    <location>
        <begin position="121"/>
        <end position="130"/>
    </location>
</feature>
<feature type="compositionally biased region" description="Basic and acidic residues" evidence="5">
    <location>
        <begin position="131"/>
        <end position="142"/>
    </location>
</feature>
<feature type="compositionally biased region" description="Acidic residues" evidence="5">
    <location>
        <begin position="167"/>
        <end position="179"/>
    </location>
</feature>
<feature type="compositionally biased region" description="Polar residues" evidence="5">
    <location>
        <begin position="182"/>
        <end position="205"/>
    </location>
</feature>
<feature type="modified residue" description="N-acetylalanine" evidence="2">
    <location>
        <position position="2"/>
    </location>
</feature>
<feature type="modified residue" description="Phosphoserine" evidence="3">
    <location>
        <position position="44"/>
    </location>
</feature>
<feature type="modified residue" description="Phosphothreonine" evidence="3">
    <location>
        <position position="89"/>
    </location>
</feature>
<feature type="modified residue" description="Phosphothreonine" evidence="3">
    <location>
        <position position="92"/>
    </location>
</feature>
<feature type="modified residue" description="Phosphoserine" evidence="6">
    <location>
        <position position="121"/>
    </location>
</feature>
<feature type="modified residue" description="Phosphoserine" evidence="6">
    <location>
        <position position="122"/>
    </location>
</feature>
<feature type="modified residue" description="Phosphoserine" evidence="6">
    <location>
        <position position="127"/>
    </location>
</feature>
<feature type="modified residue" description="Phosphoserine" evidence="4">
    <location>
        <position position="130"/>
    </location>
</feature>
<feature type="sequence conflict" description="In Ref. 3; BC066922." evidence="7" ref="3">
    <original>D</original>
    <variation>G</variation>
    <location>
        <position position="98"/>
    </location>
</feature>
<dbReference type="EMBL" id="JF438008">
    <property type="protein sequence ID" value="AEB77711.1"/>
    <property type="molecule type" value="mRNA"/>
</dbReference>
<dbReference type="EMBL" id="AC011414">
    <property type="status" value="NOT_ANNOTATED_CDS"/>
    <property type="molecule type" value="Genomic_DNA"/>
</dbReference>
<dbReference type="EMBL" id="BC066922">
    <property type="status" value="NOT_ANNOTATED_CDS"/>
    <property type="molecule type" value="mRNA"/>
</dbReference>
<dbReference type="CCDS" id="CCDS87340.1"/>
<dbReference type="RefSeq" id="NP_996740.2">
    <property type="nucleotide sequence ID" value="NM_206858.3"/>
</dbReference>
<dbReference type="FunCoup" id="Q6NXS1">
    <property type="interactions" value="15"/>
</dbReference>
<dbReference type="IntAct" id="Q6NXS1">
    <property type="interactions" value="5"/>
</dbReference>
<dbReference type="STRING" id="9606.ENSP00000490297"/>
<dbReference type="GlyGen" id="Q6NXS1">
    <property type="glycosylation" value="3 sites, 1 O-linked glycan (2 sites)"/>
</dbReference>
<dbReference type="iPTMnet" id="Q6NXS1"/>
<dbReference type="MetOSite" id="Q6NXS1"/>
<dbReference type="PhosphoSitePlus" id="Q6NXS1"/>
<dbReference type="BioMuta" id="PPP1R2P3"/>
<dbReference type="DMDM" id="74736994"/>
<dbReference type="jPOST" id="Q6NXS1"/>
<dbReference type="MassIVE" id="Q6NXS1"/>
<dbReference type="PeptideAtlas" id="Q6NXS1"/>
<dbReference type="ProteomicsDB" id="66768"/>
<dbReference type="Pumba" id="Q6NXS1"/>
<dbReference type="TopDownProteomics" id="Q6NXS1"/>
<dbReference type="Antibodypedia" id="79322">
    <property type="antibodies" value="17 antibodies from 7 providers"/>
</dbReference>
<dbReference type="Ensembl" id="ENST00000522232.3">
    <property type="protein sequence ID" value="ENSP00000490297.1"/>
    <property type="gene ID" value="ENSG00000231989.5"/>
</dbReference>
<dbReference type="GeneID" id="153743"/>
<dbReference type="MANE-Select" id="ENST00000522232.3">
    <property type="protein sequence ID" value="ENSP00000490297.1"/>
    <property type="RefSeq nucleotide sequence ID" value="NM_206858.3"/>
    <property type="RefSeq protein sequence ID" value="NP_996740.2"/>
</dbReference>
<dbReference type="AGR" id="HGNC:16318"/>
<dbReference type="GeneCards" id="PPP1R2B"/>
<dbReference type="HGNC" id="HGNC:16318">
    <property type="gene designation" value="PPP1R2B"/>
</dbReference>
<dbReference type="HPA" id="ENSG00000231989">
    <property type="expression patterns" value="Tissue enriched (testis)"/>
</dbReference>
<dbReference type="neXtProt" id="NX_Q6NXS1"/>
<dbReference type="OpenTargets" id="ENSG00000231989"/>
<dbReference type="VEuPathDB" id="HostDB:ENSG00000231989"/>
<dbReference type="GeneTree" id="ENSGT00390000004757"/>
<dbReference type="InParanoid" id="Q6NXS1"/>
<dbReference type="OMA" id="GHYREWH"/>
<dbReference type="OrthoDB" id="551302at2759"/>
<dbReference type="PAN-GO" id="Q6NXS1">
    <property type="GO annotations" value="2 GO annotations based on evolutionary models"/>
</dbReference>
<dbReference type="PathwayCommons" id="Q6NXS1"/>
<dbReference type="SignaLink" id="Q6NXS1"/>
<dbReference type="Pharos" id="Q6NXS1">
    <property type="development level" value="Tdark"/>
</dbReference>
<dbReference type="PRO" id="PR:Q6NXS1"/>
<dbReference type="Proteomes" id="UP000005640">
    <property type="component" value="Chromosome 5"/>
</dbReference>
<dbReference type="RNAct" id="Q6NXS1">
    <property type="molecule type" value="protein"/>
</dbReference>
<dbReference type="Bgee" id="ENSG00000231989">
    <property type="expression patterns" value="Expressed in left testis and 10 other cell types or tissues"/>
</dbReference>
<dbReference type="GO" id="GO:0004864">
    <property type="term" value="F:protein phosphatase inhibitor activity"/>
    <property type="evidence" value="ECO:0000318"/>
    <property type="project" value="GO_Central"/>
</dbReference>
<dbReference type="GO" id="GO:0005977">
    <property type="term" value="P:glycogen metabolic process"/>
    <property type="evidence" value="ECO:0007669"/>
    <property type="project" value="UniProtKB-KW"/>
</dbReference>
<dbReference type="GO" id="GO:0035556">
    <property type="term" value="P:intracellular signal transduction"/>
    <property type="evidence" value="ECO:0000318"/>
    <property type="project" value="GO_Central"/>
</dbReference>
<dbReference type="GO" id="GO:0009966">
    <property type="term" value="P:regulation of signal transduction"/>
    <property type="evidence" value="ECO:0007669"/>
    <property type="project" value="InterPro"/>
</dbReference>
<dbReference type="Gene3D" id="6.10.250.1050">
    <property type="match status" value="2"/>
</dbReference>
<dbReference type="InterPro" id="IPR007062">
    <property type="entry name" value="PPI-2"/>
</dbReference>
<dbReference type="PANTHER" id="PTHR12398">
    <property type="entry name" value="PROTEIN PHOSPHATASE INHIBITOR"/>
    <property type="match status" value="1"/>
</dbReference>
<dbReference type="PANTHER" id="PTHR12398:SF27">
    <property type="entry name" value="PROTEIN PHOSPHATASE INHIBITOR 2 FAMILY MEMBER B"/>
    <property type="match status" value="1"/>
</dbReference>
<dbReference type="Pfam" id="PF04979">
    <property type="entry name" value="IPP-2"/>
    <property type="match status" value="1"/>
</dbReference>
<comment type="function">
    <text evidence="6">Inhibitor of protein-phosphatase 1.</text>
</comment>
<comment type="subunit">
    <text evidence="6">Interacts with PPP1CC.</text>
</comment>
<comment type="interaction">
    <interactant intactId="EBI-10251630">
        <id>Q6NXS1</id>
    </interactant>
    <interactant intactId="EBI-18200422">
        <id>Q7Z2G1</id>
        <label>H2BW1</label>
    </interactant>
    <organismsDiffer>false</organismsDiffer>
    <experiments>3</experiments>
</comment>
<comment type="interaction">
    <interactant intactId="EBI-10251630">
        <id>Q6NXS1</id>
    </interactant>
    <interactant intactId="EBI-357253">
        <id>P62136</id>
        <label>PPP1CA</label>
    </interactant>
    <organismsDiffer>false</organismsDiffer>
    <experiments>3</experiments>
</comment>
<comment type="interaction">
    <interactant intactId="EBI-10251630">
        <id>Q6NXS1</id>
    </interactant>
    <interactant intactId="EBI-352350">
        <id>P62140</id>
        <label>PPP1CB</label>
    </interactant>
    <organismsDiffer>false</organismsDiffer>
    <experiments>8</experiments>
</comment>
<comment type="interaction">
    <interactant intactId="EBI-10251630">
        <id>Q6NXS1</id>
    </interactant>
    <interactant intactId="EBI-356283">
        <id>P36873</id>
        <label>PPP1CC</label>
    </interactant>
    <organismsDiffer>false</organismsDiffer>
    <experiments>5</experiments>
</comment>
<comment type="tissue specificity">
    <text evidence="6">Only detected in spermatozoa, both heads and tails.</text>
</comment>
<comment type="similarity">
    <text evidence="7">Belongs to the protein phosphatase inhibitor 2 family.</text>
</comment>
<reference key="1">
    <citation type="journal article" date="2011" name="Biochem. Pharmacol.">
        <title>Identification of the human testis protein phosphatase 1 interactome.</title>
        <authorList>
            <person name="Fardilha M."/>
            <person name="Korrodi-Gregorio L."/>
            <person name="Vintem A.P."/>
            <person name="Domingues S.C.T.S."/>
            <person name="Rebelo S."/>
            <person name="Morrice N."/>
            <person name="Cohen P.T.W."/>
            <person name="da Cruz e Silva O.A.B."/>
            <person name="da Cruz e Silva E.F."/>
        </authorList>
    </citation>
    <scope>NUCLEOTIDE SEQUENCE [MRNA]</scope>
    <source>
        <tissue>Testis</tissue>
    </source>
</reference>
<reference key="2">
    <citation type="journal article" date="2004" name="Nature">
        <title>The DNA sequence and comparative analysis of human chromosome 5.</title>
        <authorList>
            <person name="Schmutz J."/>
            <person name="Martin J."/>
            <person name="Terry A."/>
            <person name="Couronne O."/>
            <person name="Grimwood J."/>
            <person name="Lowry S."/>
            <person name="Gordon L.A."/>
            <person name="Scott D."/>
            <person name="Xie G."/>
            <person name="Huang W."/>
            <person name="Hellsten U."/>
            <person name="Tran-Gyamfi M."/>
            <person name="She X."/>
            <person name="Prabhakar S."/>
            <person name="Aerts A."/>
            <person name="Altherr M."/>
            <person name="Bajorek E."/>
            <person name="Black S."/>
            <person name="Branscomb E."/>
            <person name="Caoile C."/>
            <person name="Challacombe J.F."/>
            <person name="Chan Y.M."/>
            <person name="Denys M."/>
            <person name="Detter J.C."/>
            <person name="Escobar J."/>
            <person name="Flowers D."/>
            <person name="Fotopulos D."/>
            <person name="Glavina T."/>
            <person name="Gomez M."/>
            <person name="Gonzales E."/>
            <person name="Goodstein D."/>
            <person name="Grigoriev I."/>
            <person name="Groza M."/>
            <person name="Hammon N."/>
            <person name="Hawkins T."/>
            <person name="Haydu L."/>
            <person name="Israni S."/>
            <person name="Jett J."/>
            <person name="Kadner K."/>
            <person name="Kimball H."/>
            <person name="Kobayashi A."/>
            <person name="Lopez F."/>
            <person name="Lou Y."/>
            <person name="Martinez D."/>
            <person name="Medina C."/>
            <person name="Morgan J."/>
            <person name="Nandkeshwar R."/>
            <person name="Noonan J.P."/>
            <person name="Pitluck S."/>
            <person name="Pollard M."/>
            <person name="Predki P."/>
            <person name="Priest J."/>
            <person name="Ramirez L."/>
            <person name="Retterer J."/>
            <person name="Rodriguez A."/>
            <person name="Rogers S."/>
            <person name="Salamov A."/>
            <person name="Salazar A."/>
            <person name="Thayer N."/>
            <person name="Tice H."/>
            <person name="Tsai M."/>
            <person name="Ustaszewska A."/>
            <person name="Vo N."/>
            <person name="Wheeler J."/>
            <person name="Wu K."/>
            <person name="Yang J."/>
            <person name="Dickson M."/>
            <person name="Cheng J.-F."/>
            <person name="Eichler E.E."/>
            <person name="Olsen A."/>
            <person name="Pennacchio L.A."/>
            <person name="Rokhsar D.S."/>
            <person name="Richardson P."/>
            <person name="Lucas S.M."/>
            <person name="Myers R.M."/>
            <person name="Rubin E.M."/>
        </authorList>
    </citation>
    <scope>NUCLEOTIDE SEQUENCE [LARGE SCALE GENOMIC DNA]</scope>
</reference>
<reference key="3">
    <citation type="journal article" date="2004" name="Genome Res.">
        <title>The status, quality, and expansion of the NIH full-length cDNA project: the Mammalian Gene Collection (MGC).</title>
        <authorList>
            <consortium name="The MGC Project Team"/>
        </authorList>
    </citation>
    <scope>NUCLEOTIDE SEQUENCE [LARGE SCALE MRNA]</scope>
    <source>
        <tissue>Testis</tissue>
    </source>
</reference>
<reference key="4">
    <citation type="journal article" date="2013" name="BMC Cell Biol.">
        <title>Identification and characterization of two distinct PPP1R2 isoforms in human spermatozoa.</title>
        <authorList>
            <person name="Korrodi-Gregorio L."/>
            <person name="Ferreira M."/>
            <person name="Vintem A.P."/>
            <person name="Wu W."/>
            <person name="Muller T."/>
            <person name="Marcus K."/>
            <person name="Vijayaraghavan S."/>
            <person name="Brautigan D.L."/>
            <person name="da Cruz E Silva O.A."/>
            <person name="Fardilha M."/>
            <person name="da Cruz E Silva E.F."/>
        </authorList>
    </citation>
    <scope>FUNCTION</scope>
    <scope>IDENTIFICATION BY MASS SPECTROMETRY</scope>
    <scope>TISSUE SPECIFICITY</scope>
    <scope>PHOSPHORYLATION AT SER-121; SER-122 AND SER-127</scope>
    <scope>INTERACTION WITH PPP1CC</scope>
</reference>
<protein>
    <recommendedName>
        <fullName evidence="7">Protein phosphatase inhibitor 2 family member B</fullName>
    </recommendedName>
    <alternativeName>
        <fullName>PPP1R2 family member B</fullName>
    </alternativeName>
    <alternativeName>
        <fullName>Protein phosphatase 1, regulatory subunit 2 pseudogene 3</fullName>
    </alternativeName>
    <alternativeName>
        <fullName>Protein phosphatase inhibitor 2-like protein 3</fullName>
    </alternativeName>
</protein>